<evidence type="ECO:0000255" key="1">
    <source>
        <dbReference type="HAMAP-Rule" id="MF_01898"/>
    </source>
</evidence>
<evidence type="ECO:0007829" key="2">
    <source>
        <dbReference type="PDB" id="4Z2C"/>
    </source>
</evidence>
<evidence type="ECO:0007829" key="3">
    <source>
        <dbReference type="PDB" id="4Z2E"/>
    </source>
</evidence>
<reference key="1">
    <citation type="journal article" date="2001" name="J. Bacteriol.">
        <title>Genome of the bacterium Streptococcus pneumoniae strain R6.</title>
        <authorList>
            <person name="Hoskins J."/>
            <person name="Alborn W.E. Jr."/>
            <person name="Arnold J."/>
            <person name="Blaszczak L.C."/>
            <person name="Burgett S."/>
            <person name="DeHoff B.S."/>
            <person name="Estrem S.T."/>
            <person name="Fritz L."/>
            <person name="Fu D.-J."/>
            <person name="Fuller W."/>
            <person name="Geringer C."/>
            <person name="Gilmour R."/>
            <person name="Glass J.S."/>
            <person name="Khoja H."/>
            <person name="Kraft A.R."/>
            <person name="Lagace R.E."/>
            <person name="LeBlanc D.J."/>
            <person name="Lee L.N."/>
            <person name="Lefkowitz E.J."/>
            <person name="Lu J."/>
            <person name="Matsushima P."/>
            <person name="McAhren S.M."/>
            <person name="McHenney M."/>
            <person name="McLeaster K."/>
            <person name="Mundy C.W."/>
            <person name="Nicas T.I."/>
            <person name="Norris F.H."/>
            <person name="O'Gara M."/>
            <person name="Peery R.B."/>
            <person name="Robertson G.T."/>
            <person name="Rockey P."/>
            <person name="Sun P.-M."/>
            <person name="Winkler M.E."/>
            <person name="Yang Y."/>
            <person name="Young-Bellido M."/>
            <person name="Zhao G."/>
            <person name="Zook C.A."/>
            <person name="Baltz R.H."/>
            <person name="Jaskunas S.R."/>
            <person name="Rosteck P.R. Jr."/>
            <person name="Skatrud P.L."/>
            <person name="Glass J.I."/>
        </authorList>
    </citation>
    <scope>NUCLEOTIDE SEQUENCE [LARGE SCALE GENOMIC DNA]</scope>
    <source>
        <strain>ATCC BAA-255 / R6</strain>
    </source>
</reference>
<name>GYRB_STRR6</name>
<comment type="function">
    <text evidence="1">A type II topoisomerase that negatively supercoils closed circular double-stranded (ds) DNA in an ATP-dependent manner to modulate DNA topology and maintain chromosomes in an underwound state. Negative supercoiling favors strand separation, and DNA replication, transcription, recombination and repair, all of which involve strand separation. Also able to catalyze the interconversion of other topological isomers of dsDNA rings, including catenanes and knotted rings. Type II topoisomerases break and join 2 DNA strands simultaneously in an ATP-dependent manner.</text>
</comment>
<comment type="catalytic activity">
    <reaction evidence="1">
        <text>ATP-dependent breakage, passage and rejoining of double-stranded DNA.</text>
        <dbReference type="EC" id="5.6.2.2"/>
    </reaction>
</comment>
<comment type="cofactor">
    <cofactor evidence="1">
        <name>Mg(2+)</name>
        <dbReference type="ChEBI" id="CHEBI:18420"/>
    </cofactor>
    <cofactor evidence="1">
        <name>Mn(2+)</name>
        <dbReference type="ChEBI" id="CHEBI:29035"/>
    </cofactor>
    <cofactor evidence="1">
        <name>Ca(2+)</name>
        <dbReference type="ChEBI" id="CHEBI:29108"/>
    </cofactor>
    <text evidence="1">Binds two Mg(2+) per subunit. The magnesium ions form salt bridges with both the protein and the DNA. Can also accept other divalent metal cations, such as Mn(2+) or Ca(2+).</text>
</comment>
<comment type="subunit">
    <text evidence="1">Heterotetramer, composed of two GyrA and two GyrB chains. In the heterotetramer, GyrA contains the active site tyrosine that forms a transient covalent intermediate with DNA, while GyrB binds cofactors and catalyzes ATP hydrolysis.</text>
</comment>
<comment type="subcellular location">
    <subcellularLocation>
        <location evidence="1">Cytoplasm</location>
    </subcellularLocation>
</comment>
<comment type="miscellaneous">
    <text evidence="1">Few gyrases are as efficient as E.coli at forming negative supercoils. Not all organisms have 2 type II topoisomerases; in organisms with a single type II topoisomerase this enzyme also has to decatenate newly replicated chromosomes.</text>
</comment>
<comment type="similarity">
    <text evidence="1">Belongs to the type II topoisomerase GyrB family.</text>
</comment>
<accession>P0A4M0</accession>
<accession>P48373</accession>
<sequence>MTEEIKNLQAQDYDASQIQVLEGLEAVRMRPGMYIGSTSKEGLHHLVWEIVDNSIDEALAGFASHIQVFIEPDDSITVVDDGRGIPVDIQEKTGRPAVETVFTVLHAGGKFGGGGYKVSGGLHGVGSSVVNALSTQLDVHVHKNGKIHYQEYRRGHVVADLEIVGDTDKTGTTVHFTPDPKIFTETTIFDFDKLNKRIQELAFLNRGLQISITDKRQGLEQTKHYHYEGGIASYVEYINENKDVIFDTPIYTDGEMDDITVEVAMQYTTGYHENVMSFANNIHTHEGGTHEQGFRTALTRVINDYARKNKLLKDNEDNLTGEDVREGLTAVISVKHPNPQFEGQTKTKLGNSEVVKITNRLFSEAFSDFLMENPQIAKRIVEKGILAAKARVAAKRAREVTRKKSGLEISNLPGKLADCSSNNPAETELFIVEGDSAGGSAKSGRNREFQAILPIRGKILNVEKASMDKILANEEIRSLFTAMGTGFGAEFDVSKARYQKLVLMTDADVDGAHIRTLLLTLIYRYMKPILEAGYVYIAQPPIYGVKVGSEIKEYIQPGADQEIKLQEALARYSEGRTKPTIQRYKGLGEMDDHQLWETTMDPEHRLMARVSVDDAAEADKIFDMLMGDRVEPRREFIEENAVYSTLDV</sequence>
<proteinExistence type="evidence at protein level"/>
<gene>
    <name evidence="1" type="primary">gyrB</name>
    <name type="ordered locus">spr0715</name>
</gene>
<organism>
    <name type="scientific">Streptococcus pneumoniae (strain ATCC BAA-255 / R6)</name>
    <dbReference type="NCBI Taxonomy" id="171101"/>
    <lineage>
        <taxon>Bacteria</taxon>
        <taxon>Bacillati</taxon>
        <taxon>Bacillota</taxon>
        <taxon>Bacilli</taxon>
        <taxon>Lactobacillales</taxon>
        <taxon>Streptococcaceae</taxon>
        <taxon>Streptococcus</taxon>
    </lineage>
</organism>
<keyword id="KW-0002">3D-structure</keyword>
<keyword id="KW-0067">ATP-binding</keyword>
<keyword id="KW-0963">Cytoplasm</keyword>
<keyword id="KW-0238">DNA-binding</keyword>
<keyword id="KW-0413">Isomerase</keyword>
<keyword id="KW-0460">Magnesium</keyword>
<keyword id="KW-0479">Metal-binding</keyword>
<keyword id="KW-0547">Nucleotide-binding</keyword>
<keyword id="KW-1185">Reference proteome</keyword>
<keyword id="KW-0799">Topoisomerase</keyword>
<feature type="chain" id="PRO_0000145348" description="DNA gyrase subunit B">
    <location>
        <begin position="1"/>
        <end position="648"/>
    </location>
</feature>
<feature type="domain" description="Toprim" evidence="1">
    <location>
        <begin position="427"/>
        <end position="541"/>
    </location>
</feature>
<feature type="binding site" evidence="1">
    <location>
        <position position="433"/>
    </location>
    <ligand>
        <name>Mg(2+)</name>
        <dbReference type="ChEBI" id="CHEBI:18420"/>
        <label>1</label>
        <note>catalytic</note>
    </ligand>
</feature>
<feature type="binding site" evidence="1">
    <location>
        <position position="506"/>
    </location>
    <ligand>
        <name>Mg(2+)</name>
        <dbReference type="ChEBI" id="CHEBI:18420"/>
        <label>1</label>
        <note>catalytic</note>
    </ligand>
</feature>
<feature type="binding site" evidence="1">
    <location>
        <position position="506"/>
    </location>
    <ligand>
        <name>Mg(2+)</name>
        <dbReference type="ChEBI" id="CHEBI:18420"/>
        <label>2</label>
    </ligand>
</feature>
<feature type="binding site" evidence="1">
    <location>
        <position position="508"/>
    </location>
    <ligand>
        <name>Mg(2+)</name>
        <dbReference type="ChEBI" id="CHEBI:18420"/>
        <label>2</label>
    </ligand>
</feature>
<feature type="site" description="Interaction with DNA" evidence="1">
    <location>
        <position position="458"/>
    </location>
</feature>
<feature type="site" description="Interaction with DNA" evidence="1">
    <location>
        <position position="461"/>
    </location>
</feature>
<feature type="turn" evidence="2">
    <location>
        <begin position="424"/>
        <end position="426"/>
    </location>
</feature>
<feature type="strand" evidence="2">
    <location>
        <begin position="428"/>
        <end position="433"/>
    </location>
</feature>
<feature type="helix" evidence="2">
    <location>
        <begin position="434"/>
        <end position="442"/>
    </location>
</feature>
<feature type="strand" evidence="2">
    <location>
        <begin position="443"/>
        <end position="445"/>
    </location>
</feature>
<feature type="turn" evidence="2">
    <location>
        <begin position="447"/>
        <end position="449"/>
    </location>
</feature>
<feature type="strand" evidence="2">
    <location>
        <begin position="450"/>
        <end position="455"/>
    </location>
</feature>
<feature type="helix" evidence="2">
    <location>
        <begin position="462"/>
        <end position="464"/>
    </location>
</feature>
<feature type="helix" evidence="2">
    <location>
        <begin position="467"/>
        <end position="470"/>
    </location>
</feature>
<feature type="helix" evidence="2">
    <location>
        <begin position="474"/>
        <end position="483"/>
    </location>
</feature>
<feature type="helix" evidence="2">
    <location>
        <begin position="493"/>
        <end position="495"/>
    </location>
</feature>
<feature type="strand" evidence="2">
    <location>
        <begin position="501"/>
        <end position="504"/>
    </location>
</feature>
<feature type="helix" evidence="2">
    <location>
        <begin position="509"/>
        <end position="525"/>
    </location>
</feature>
<feature type="helix" evidence="2">
    <location>
        <begin position="527"/>
        <end position="532"/>
    </location>
</feature>
<feature type="strand" evidence="2">
    <location>
        <begin position="535"/>
        <end position="538"/>
    </location>
</feature>
<feature type="helix" evidence="2">
    <location>
        <begin position="592"/>
        <end position="599"/>
    </location>
</feature>
<feature type="turn" evidence="2">
    <location>
        <begin position="602"/>
        <end position="604"/>
    </location>
</feature>
<feature type="strand" evidence="2">
    <location>
        <begin position="606"/>
        <end position="611"/>
    </location>
</feature>
<feature type="helix" evidence="2">
    <location>
        <begin position="615"/>
        <end position="625"/>
    </location>
</feature>
<feature type="strand" evidence="3">
    <location>
        <begin position="626"/>
        <end position="628"/>
    </location>
</feature>
<feature type="helix" evidence="2">
    <location>
        <begin position="630"/>
        <end position="639"/>
    </location>
</feature>
<protein>
    <recommendedName>
        <fullName evidence="1">DNA gyrase subunit B</fullName>
        <ecNumber evidence="1">5.6.2.2</ecNumber>
    </recommendedName>
</protein>
<dbReference type="EC" id="5.6.2.2" evidence="1"/>
<dbReference type="EMBL" id="AE007317">
    <property type="protein sequence ID" value="AAK99519.1"/>
    <property type="molecule type" value="Genomic_DNA"/>
</dbReference>
<dbReference type="PIR" id="C97961">
    <property type="entry name" value="C97961"/>
</dbReference>
<dbReference type="RefSeq" id="NP_358309.1">
    <property type="nucleotide sequence ID" value="NC_003098.1"/>
</dbReference>
<dbReference type="RefSeq" id="WP_000134039.1">
    <property type="nucleotide sequence ID" value="NC_003098.1"/>
</dbReference>
<dbReference type="PDB" id="4Z2C">
    <property type="method" value="X-ray"/>
    <property type="resolution" value="3.19 A"/>
    <property type="chains" value="C/D=404-648"/>
</dbReference>
<dbReference type="PDB" id="4Z2D">
    <property type="method" value="X-ray"/>
    <property type="resolution" value="3.38 A"/>
    <property type="chains" value="C/D=404-648"/>
</dbReference>
<dbReference type="PDB" id="4Z2E">
    <property type="method" value="X-ray"/>
    <property type="resolution" value="3.46 A"/>
    <property type="chains" value="C/D=404-648"/>
</dbReference>
<dbReference type="PDBsum" id="4Z2C"/>
<dbReference type="PDBsum" id="4Z2D"/>
<dbReference type="PDBsum" id="4Z2E"/>
<dbReference type="SMR" id="P0A4M0"/>
<dbReference type="STRING" id="171101.spr0715"/>
<dbReference type="KEGG" id="spr:spr0715"/>
<dbReference type="PATRIC" id="fig|171101.6.peg.791"/>
<dbReference type="eggNOG" id="COG0187">
    <property type="taxonomic scope" value="Bacteria"/>
</dbReference>
<dbReference type="HOGENOM" id="CLU_006146_4_1_9"/>
<dbReference type="Proteomes" id="UP000000586">
    <property type="component" value="Chromosome"/>
</dbReference>
<dbReference type="GO" id="GO:0005694">
    <property type="term" value="C:chromosome"/>
    <property type="evidence" value="ECO:0007669"/>
    <property type="project" value="InterPro"/>
</dbReference>
<dbReference type="GO" id="GO:0005737">
    <property type="term" value="C:cytoplasm"/>
    <property type="evidence" value="ECO:0007669"/>
    <property type="project" value="UniProtKB-SubCell"/>
</dbReference>
<dbReference type="GO" id="GO:0005524">
    <property type="term" value="F:ATP binding"/>
    <property type="evidence" value="ECO:0007669"/>
    <property type="project" value="UniProtKB-UniRule"/>
</dbReference>
<dbReference type="GO" id="GO:0003677">
    <property type="term" value="F:DNA binding"/>
    <property type="evidence" value="ECO:0007669"/>
    <property type="project" value="UniProtKB-KW"/>
</dbReference>
<dbReference type="GO" id="GO:0034335">
    <property type="term" value="F:DNA negative supercoiling activity"/>
    <property type="evidence" value="ECO:0007669"/>
    <property type="project" value="UniProtKB-ARBA"/>
</dbReference>
<dbReference type="GO" id="GO:0046872">
    <property type="term" value="F:metal ion binding"/>
    <property type="evidence" value="ECO:0007669"/>
    <property type="project" value="UniProtKB-KW"/>
</dbReference>
<dbReference type="GO" id="GO:0006265">
    <property type="term" value="P:DNA topological change"/>
    <property type="evidence" value="ECO:0007669"/>
    <property type="project" value="UniProtKB-UniRule"/>
</dbReference>
<dbReference type="GO" id="GO:0006261">
    <property type="term" value="P:DNA-templated DNA replication"/>
    <property type="evidence" value="ECO:0007669"/>
    <property type="project" value="UniProtKB-UniRule"/>
</dbReference>
<dbReference type="CDD" id="cd16928">
    <property type="entry name" value="HATPase_GyrB-like"/>
    <property type="match status" value="1"/>
</dbReference>
<dbReference type="CDD" id="cd00822">
    <property type="entry name" value="TopoII_Trans_DNA_gyrase"/>
    <property type="match status" value="1"/>
</dbReference>
<dbReference type="CDD" id="cd03366">
    <property type="entry name" value="TOPRIM_TopoIIA_GyrB"/>
    <property type="match status" value="1"/>
</dbReference>
<dbReference type="FunFam" id="3.30.230.10:FF:000005">
    <property type="entry name" value="DNA gyrase subunit B"/>
    <property type="match status" value="1"/>
</dbReference>
<dbReference type="FunFam" id="3.30.565.10:FF:000002">
    <property type="entry name" value="DNA gyrase subunit B"/>
    <property type="match status" value="1"/>
</dbReference>
<dbReference type="FunFam" id="3.40.50.670:FF:000002">
    <property type="entry name" value="DNA gyrase subunit B"/>
    <property type="match status" value="1"/>
</dbReference>
<dbReference type="Gene3D" id="3.30.230.10">
    <property type="match status" value="1"/>
</dbReference>
<dbReference type="Gene3D" id="3.40.50.670">
    <property type="match status" value="1"/>
</dbReference>
<dbReference type="Gene3D" id="3.30.565.10">
    <property type="entry name" value="Histidine kinase-like ATPase, C-terminal domain"/>
    <property type="match status" value="1"/>
</dbReference>
<dbReference type="HAMAP" id="MF_01898">
    <property type="entry name" value="GyrB"/>
    <property type="match status" value="1"/>
</dbReference>
<dbReference type="InterPro" id="IPR002288">
    <property type="entry name" value="DNA_gyrase_B_C"/>
</dbReference>
<dbReference type="InterPro" id="IPR011557">
    <property type="entry name" value="GyrB"/>
</dbReference>
<dbReference type="InterPro" id="IPR036890">
    <property type="entry name" value="HATPase_C_sf"/>
</dbReference>
<dbReference type="InterPro" id="IPR020568">
    <property type="entry name" value="Ribosomal_Su5_D2-typ_SF"/>
</dbReference>
<dbReference type="InterPro" id="IPR014721">
    <property type="entry name" value="Ribsml_uS5_D2-typ_fold_subgr"/>
</dbReference>
<dbReference type="InterPro" id="IPR001241">
    <property type="entry name" value="Topo_IIA"/>
</dbReference>
<dbReference type="InterPro" id="IPR013760">
    <property type="entry name" value="Topo_IIA-like_dom_sf"/>
</dbReference>
<dbReference type="InterPro" id="IPR000565">
    <property type="entry name" value="Topo_IIA_B"/>
</dbReference>
<dbReference type="InterPro" id="IPR013759">
    <property type="entry name" value="Topo_IIA_B_C"/>
</dbReference>
<dbReference type="InterPro" id="IPR013506">
    <property type="entry name" value="Topo_IIA_bsu_dom2"/>
</dbReference>
<dbReference type="InterPro" id="IPR018522">
    <property type="entry name" value="TopoIIA_CS"/>
</dbReference>
<dbReference type="InterPro" id="IPR006171">
    <property type="entry name" value="TOPRIM_dom"/>
</dbReference>
<dbReference type="InterPro" id="IPR034160">
    <property type="entry name" value="TOPRIM_GyrB"/>
</dbReference>
<dbReference type="NCBIfam" id="TIGR01059">
    <property type="entry name" value="gyrB"/>
    <property type="match status" value="1"/>
</dbReference>
<dbReference type="NCBIfam" id="NF004189">
    <property type="entry name" value="PRK05644.1"/>
    <property type="match status" value="1"/>
</dbReference>
<dbReference type="NCBIfam" id="NF011501">
    <property type="entry name" value="PRK14939.1"/>
    <property type="match status" value="1"/>
</dbReference>
<dbReference type="PANTHER" id="PTHR45866:SF1">
    <property type="entry name" value="DNA GYRASE SUBUNIT B, MITOCHONDRIAL"/>
    <property type="match status" value="1"/>
</dbReference>
<dbReference type="PANTHER" id="PTHR45866">
    <property type="entry name" value="DNA GYRASE/TOPOISOMERASE SUBUNIT B"/>
    <property type="match status" value="1"/>
</dbReference>
<dbReference type="Pfam" id="PF00204">
    <property type="entry name" value="DNA_gyraseB"/>
    <property type="match status" value="1"/>
</dbReference>
<dbReference type="Pfam" id="PF00986">
    <property type="entry name" value="DNA_gyraseB_C"/>
    <property type="match status" value="1"/>
</dbReference>
<dbReference type="Pfam" id="PF02518">
    <property type="entry name" value="HATPase_c"/>
    <property type="match status" value="1"/>
</dbReference>
<dbReference type="Pfam" id="PF01751">
    <property type="entry name" value="Toprim"/>
    <property type="match status" value="1"/>
</dbReference>
<dbReference type="PRINTS" id="PR01159">
    <property type="entry name" value="DNAGYRASEB"/>
</dbReference>
<dbReference type="PRINTS" id="PR00418">
    <property type="entry name" value="TPI2FAMILY"/>
</dbReference>
<dbReference type="SMART" id="SM00387">
    <property type="entry name" value="HATPase_c"/>
    <property type="match status" value="1"/>
</dbReference>
<dbReference type="SMART" id="SM00433">
    <property type="entry name" value="TOP2c"/>
    <property type="match status" value="1"/>
</dbReference>
<dbReference type="SUPFAM" id="SSF55874">
    <property type="entry name" value="ATPase domain of HSP90 chaperone/DNA topoisomerase II/histidine kinase"/>
    <property type="match status" value="1"/>
</dbReference>
<dbReference type="SUPFAM" id="SSF54211">
    <property type="entry name" value="Ribosomal protein S5 domain 2-like"/>
    <property type="match status" value="1"/>
</dbReference>
<dbReference type="SUPFAM" id="SSF56719">
    <property type="entry name" value="Type II DNA topoisomerase"/>
    <property type="match status" value="1"/>
</dbReference>
<dbReference type="PROSITE" id="PS00177">
    <property type="entry name" value="TOPOISOMERASE_II"/>
    <property type="match status" value="1"/>
</dbReference>
<dbReference type="PROSITE" id="PS50880">
    <property type="entry name" value="TOPRIM"/>
    <property type="match status" value="1"/>
</dbReference>